<comment type="function">
    <text evidence="1">Regulates the transcription of the pyrimidine nucleotide (pyr) operon in response to exogenous pyrimidines.</text>
</comment>
<comment type="function">
    <text evidence="1">Also displays a weak uracil phosphoribosyltransferase activity which is not physiologically significant.</text>
</comment>
<comment type="catalytic activity">
    <reaction evidence="1">
        <text>UMP + diphosphate = 5-phospho-alpha-D-ribose 1-diphosphate + uracil</text>
        <dbReference type="Rhea" id="RHEA:13017"/>
        <dbReference type="ChEBI" id="CHEBI:17568"/>
        <dbReference type="ChEBI" id="CHEBI:33019"/>
        <dbReference type="ChEBI" id="CHEBI:57865"/>
        <dbReference type="ChEBI" id="CHEBI:58017"/>
        <dbReference type="EC" id="2.4.2.9"/>
    </reaction>
</comment>
<comment type="similarity">
    <text evidence="1">Belongs to the purine/pyrimidine phosphoribosyltransferase family. PyrR subfamily.</text>
</comment>
<sequence length="192" mass="21002">MSERRNTVVELLGENDVSRTVARIAHQIIEKTALDSEGADRVMLLGIPSGGVPLAERLAAKIEEFSGVRVDTGAIDITLYRDDLRNKPHRALQPTSIPSGGIDKTTVVLVDDVLFSGRTVRAALDALRDLGRPNYIQLAVLVDRGHRQLPIRADYVGKNLPTARAEDVTVMLREIDGRDAVTLTREEGEGDN</sequence>
<dbReference type="EC" id="2.4.2.9" evidence="1"/>
<dbReference type="EMBL" id="BA000035">
    <property type="protein sequence ID" value="BAC18543.1"/>
    <property type="molecule type" value="Genomic_DNA"/>
</dbReference>
<dbReference type="RefSeq" id="WP_006767733.1">
    <property type="nucleotide sequence ID" value="NC_004369.1"/>
</dbReference>
<dbReference type="SMR" id="Q8FT38"/>
<dbReference type="STRING" id="196164.gene:10742154"/>
<dbReference type="KEGG" id="cef:CE1733"/>
<dbReference type="eggNOG" id="COG2065">
    <property type="taxonomic scope" value="Bacteria"/>
</dbReference>
<dbReference type="HOGENOM" id="CLU_094234_2_1_11"/>
<dbReference type="OrthoDB" id="9802227at2"/>
<dbReference type="Proteomes" id="UP000001409">
    <property type="component" value="Chromosome"/>
</dbReference>
<dbReference type="GO" id="GO:0004845">
    <property type="term" value="F:uracil phosphoribosyltransferase activity"/>
    <property type="evidence" value="ECO:0007669"/>
    <property type="project" value="UniProtKB-UniRule"/>
</dbReference>
<dbReference type="GO" id="GO:0006355">
    <property type="term" value="P:regulation of DNA-templated transcription"/>
    <property type="evidence" value="ECO:0007669"/>
    <property type="project" value="UniProtKB-UniRule"/>
</dbReference>
<dbReference type="CDD" id="cd06223">
    <property type="entry name" value="PRTases_typeI"/>
    <property type="match status" value="1"/>
</dbReference>
<dbReference type="FunFam" id="3.40.50.2020:FF:000020">
    <property type="entry name" value="Bifunctional protein PyrR"/>
    <property type="match status" value="1"/>
</dbReference>
<dbReference type="Gene3D" id="3.40.50.2020">
    <property type="match status" value="1"/>
</dbReference>
<dbReference type="HAMAP" id="MF_01219">
    <property type="entry name" value="PyrR"/>
    <property type="match status" value="1"/>
</dbReference>
<dbReference type="InterPro" id="IPR000836">
    <property type="entry name" value="PRibTrfase_dom"/>
</dbReference>
<dbReference type="InterPro" id="IPR029057">
    <property type="entry name" value="PRTase-like"/>
</dbReference>
<dbReference type="InterPro" id="IPR023050">
    <property type="entry name" value="PyrR"/>
</dbReference>
<dbReference type="InterPro" id="IPR050137">
    <property type="entry name" value="PyrR_bifunctional"/>
</dbReference>
<dbReference type="NCBIfam" id="NF003547">
    <property type="entry name" value="PRK05205.1-3"/>
    <property type="match status" value="1"/>
</dbReference>
<dbReference type="NCBIfam" id="NF003549">
    <property type="entry name" value="PRK05205.1-5"/>
    <property type="match status" value="1"/>
</dbReference>
<dbReference type="PANTHER" id="PTHR11608">
    <property type="entry name" value="BIFUNCTIONAL PROTEIN PYRR"/>
    <property type="match status" value="1"/>
</dbReference>
<dbReference type="PANTHER" id="PTHR11608:SF0">
    <property type="entry name" value="BIFUNCTIONAL PROTEIN PYRR"/>
    <property type="match status" value="1"/>
</dbReference>
<dbReference type="Pfam" id="PF00156">
    <property type="entry name" value="Pribosyltran"/>
    <property type="match status" value="1"/>
</dbReference>
<dbReference type="SUPFAM" id="SSF53271">
    <property type="entry name" value="PRTase-like"/>
    <property type="match status" value="1"/>
</dbReference>
<name>PYRR_COREF</name>
<gene>
    <name evidence="1" type="primary">pyrR</name>
    <name type="ordered locus">CE1733</name>
</gene>
<accession>Q8FT38</accession>
<organism>
    <name type="scientific">Corynebacterium efficiens (strain DSM 44549 / YS-314 / AJ 12310 / JCM 11189 / NBRC 100395)</name>
    <dbReference type="NCBI Taxonomy" id="196164"/>
    <lineage>
        <taxon>Bacteria</taxon>
        <taxon>Bacillati</taxon>
        <taxon>Actinomycetota</taxon>
        <taxon>Actinomycetes</taxon>
        <taxon>Mycobacteriales</taxon>
        <taxon>Corynebacteriaceae</taxon>
        <taxon>Corynebacterium</taxon>
    </lineage>
</organism>
<keyword id="KW-0328">Glycosyltransferase</keyword>
<keyword id="KW-1185">Reference proteome</keyword>
<keyword id="KW-0804">Transcription</keyword>
<keyword id="KW-0805">Transcription regulation</keyword>
<keyword id="KW-0808">Transferase</keyword>
<reference key="1">
    <citation type="journal article" date="2003" name="Genome Res.">
        <title>Comparative complete genome sequence analysis of the amino acid replacements responsible for the thermostability of Corynebacterium efficiens.</title>
        <authorList>
            <person name="Nishio Y."/>
            <person name="Nakamura Y."/>
            <person name="Kawarabayasi Y."/>
            <person name="Usuda Y."/>
            <person name="Kimura E."/>
            <person name="Sugimoto S."/>
            <person name="Matsui K."/>
            <person name="Yamagishi A."/>
            <person name="Kikuchi H."/>
            <person name="Ikeo K."/>
            <person name="Gojobori T."/>
        </authorList>
    </citation>
    <scope>NUCLEOTIDE SEQUENCE [LARGE SCALE GENOMIC DNA]</scope>
    <source>
        <strain>DSM 44549 / YS-314 / AJ 12310 / JCM 11189 / NBRC 100395</strain>
    </source>
</reference>
<evidence type="ECO:0000255" key="1">
    <source>
        <dbReference type="HAMAP-Rule" id="MF_01219"/>
    </source>
</evidence>
<feature type="chain" id="PRO_1000053833" description="Bifunctional protein PyrR">
    <location>
        <begin position="1"/>
        <end position="192"/>
    </location>
</feature>
<feature type="short sequence motif" description="PRPP-binding" evidence="1">
    <location>
        <begin position="107"/>
        <end position="119"/>
    </location>
</feature>
<protein>
    <recommendedName>
        <fullName evidence="1">Bifunctional protein PyrR</fullName>
    </recommendedName>
    <domain>
        <recommendedName>
            <fullName evidence="1">Pyrimidine operon regulatory protein</fullName>
        </recommendedName>
    </domain>
    <domain>
        <recommendedName>
            <fullName evidence="1">Uracil phosphoribosyltransferase</fullName>
            <shortName evidence="1">UPRTase</shortName>
            <ecNumber evidence="1">2.4.2.9</ecNumber>
        </recommendedName>
    </domain>
</protein>
<proteinExistence type="inferred from homology"/>